<accession>A6LNU3</accession>
<reference key="1">
    <citation type="submission" date="2007-05" db="EMBL/GenBank/DDBJ databases">
        <title>Complete sequence of Thermosipho melanesiensis BI429.</title>
        <authorList>
            <consortium name="US DOE Joint Genome Institute"/>
            <person name="Copeland A."/>
            <person name="Lucas S."/>
            <person name="Lapidus A."/>
            <person name="Barry K."/>
            <person name="Glavina del Rio T."/>
            <person name="Dalin E."/>
            <person name="Tice H."/>
            <person name="Pitluck S."/>
            <person name="Chertkov O."/>
            <person name="Brettin T."/>
            <person name="Bruce D."/>
            <person name="Detter J.C."/>
            <person name="Han C."/>
            <person name="Schmutz J."/>
            <person name="Larimer F."/>
            <person name="Land M."/>
            <person name="Hauser L."/>
            <person name="Kyrpides N."/>
            <person name="Mikhailova N."/>
            <person name="Nelson K."/>
            <person name="Gogarten J.P."/>
            <person name="Noll K."/>
            <person name="Richardson P."/>
        </authorList>
    </citation>
    <scope>NUCLEOTIDE SEQUENCE [LARGE SCALE GENOMIC DNA]</scope>
    <source>
        <strain>DSM 12029 / CIP 104789 / BI429</strain>
    </source>
</reference>
<name>RS20_THEM4</name>
<keyword id="KW-0687">Ribonucleoprotein</keyword>
<keyword id="KW-0689">Ribosomal protein</keyword>
<keyword id="KW-0694">RNA-binding</keyword>
<keyword id="KW-0699">rRNA-binding</keyword>
<comment type="function">
    <text evidence="1">Binds directly to 16S ribosomal RNA.</text>
</comment>
<comment type="similarity">
    <text evidence="1">Belongs to the bacterial ribosomal protein bS20 family.</text>
</comment>
<organism>
    <name type="scientific">Thermosipho melanesiensis (strain DSM 12029 / CIP 104789 / BI429)</name>
    <dbReference type="NCBI Taxonomy" id="391009"/>
    <lineage>
        <taxon>Bacteria</taxon>
        <taxon>Thermotogati</taxon>
        <taxon>Thermotogota</taxon>
        <taxon>Thermotogae</taxon>
        <taxon>Thermotogales</taxon>
        <taxon>Fervidobacteriaceae</taxon>
        <taxon>Thermosipho</taxon>
    </lineage>
</organism>
<proteinExistence type="inferred from homology"/>
<protein>
    <recommendedName>
        <fullName evidence="1">Small ribosomal subunit protein bS20</fullName>
    </recommendedName>
    <alternativeName>
        <fullName evidence="2">30S ribosomal protein S20</fullName>
    </alternativeName>
</protein>
<evidence type="ECO:0000255" key="1">
    <source>
        <dbReference type="HAMAP-Rule" id="MF_00500"/>
    </source>
</evidence>
<evidence type="ECO:0000305" key="2"/>
<dbReference type="EMBL" id="CP000716">
    <property type="protein sequence ID" value="ABR31594.1"/>
    <property type="molecule type" value="Genomic_DNA"/>
</dbReference>
<dbReference type="RefSeq" id="WP_012057953.1">
    <property type="nucleotide sequence ID" value="NC_009616.1"/>
</dbReference>
<dbReference type="SMR" id="A6LNU3"/>
<dbReference type="STRING" id="391009.Tmel_1755"/>
<dbReference type="KEGG" id="tme:Tmel_1755"/>
<dbReference type="eggNOG" id="COG0268">
    <property type="taxonomic scope" value="Bacteria"/>
</dbReference>
<dbReference type="HOGENOM" id="CLU_160655_5_0_0"/>
<dbReference type="OrthoDB" id="9808392at2"/>
<dbReference type="Proteomes" id="UP000001110">
    <property type="component" value="Chromosome"/>
</dbReference>
<dbReference type="GO" id="GO:0005829">
    <property type="term" value="C:cytosol"/>
    <property type="evidence" value="ECO:0007669"/>
    <property type="project" value="TreeGrafter"/>
</dbReference>
<dbReference type="GO" id="GO:0015935">
    <property type="term" value="C:small ribosomal subunit"/>
    <property type="evidence" value="ECO:0007669"/>
    <property type="project" value="TreeGrafter"/>
</dbReference>
<dbReference type="GO" id="GO:0070181">
    <property type="term" value="F:small ribosomal subunit rRNA binding"/>
    <property type="evidence" value="ECO:0007669"/>
    <property type="project" value="TreeGrafter"/>
</dbReference>
<dbReference type="GO" id="GO:0003735">
    <property type="term" value="F:structural constituent of ribosome"/>
    <property type="evidence" value="ECO:0007669"/>
    <property type="project" value="InterPro"/>
</dbReference>
<dbReference type="GO" id="GO:0006412">
    <property type="term" value="P:translation"/>
    <property type="evidence" value="ECO:0007669"/>
    <property type="project" value="UniProtKB-UniRule"/>
</dbReference>
<dbReference type="FunFam" id="1.20.58.110:FF:000001">
    <property type="entry name" value="30S ribosomal protein S20"/>
    <property type="match status" value="1"/>
</dbReference>
<dbReference type="Gene3D" id="1.20.58.110">
    <property type="entry name" value="Ribosomal protein S20"/>
    <property type="match status" value="1"/>
</dbReference>
<dbReference type="HAMAP" id="MF_00500">
    <property type="entry name" value="Ribosomal_bS20"/>
    <property type="match status" value="1"/>
</dbReference>
<dbReference type="InterPro" id="IPR002583">
    <property type="entry name" value="Ribosomal_bS20"/>
</dbReference>
<dbReference type="InterPro" id="IPR036510">
    <property type="entry name" value="Ribosomal_bS20_sf"/>
</dbReference>
<dbReference type="NCBIfam" id="TIGR00029">
    <property type="entry name" value="S20"/>
    <property type="match status" value="1"/>
</dbReference>
<dbReference type="PANTHER" id="PTHR33398">
    <property type="entry name" value="30S RIBOSOMAL PROTEIN S20"/>
    <property type="match status" value="1"/>
</dbReference>
<dbReference type="PANTHER" id="PTHR33398:SF1">
    <property type="entry name" value="SMALL RIBOSOMAL SUBUNIT PROTEIN BS20C"/>
    <property type="match status" value="1"/>
</dbReference>
<dbReference type="Pfam" id="PF01649">
    <property type="entry name" value="Ribosomal_S20p"/>
    <property type="match status" value="1"/>
</dbReference>
<dbReference type="SUPFAM" id="SSF46992">
    <property type="entry name" value="Ribosomal protein S20"/>
    <property type="match status" value="1"/>
</dbReference>
<feature type="chain" id="PRO_1000014671" description="Small ribosomal subunit protein bS20">
    <location>
        <begin position="1"/>
        <end position="91"/>
    </location>
</feature>
<sequence>MPNIKSAKRRVKISERNRLINKAYKTRMKNSIKKVLLALSEGKTKEEVEQLYKIAQSAIDKAAKIGAVHKNEAARRKSRLMSKINKHFAIE</sequence>
<gene>
    <name evidence="1" type="primary">rpsT</name>
    <name type="ordered locus">Tmel_1755</name>
</gene>